<feature type="chain" id="PRO_1000061810" description="Ribosomal RNA large subunit methyltransferase H">
    <location>
        <begin position="1"/>
        <end position="152"/>
    </location>
</feature>
<feature type="binding site" evidence="1">
    <location>
        <position position="69"/>
    </location>
    <ligand>
        <name>S-adenosyl-L-methionine</name>
        <dbReference type="ChEBI" id="CHEBI:59789"/>
    </ligand>
</feature>
<feature type="binding site" evidence="1">
    <location>
        <position position="96"/>
    </location>
    <ligand>
        <name>S-adenosyl-L-methionine</name>
        <dbReference type="ChEBI" id="CHEBI:59789"/>
    </ligand>
</feature>
<feature type="binding site" evidence="1">
    <location>
        <begin position="118"/>
        <end position="123"/>
    </location>
    <ligand>
        <name>S-adenosyl-L-methionine</name>
        <dbReference type="ChEBI" id="CHEBI:59789"/>
    </ligand>
</feature>
<proteinExistence type="inferred from homology"/>
<sequence>MKISIISFGSSPREWLGLYKKEINKIKQFKYQIEFINLSEHSQENIELKKMLETKDILQKIPKNSSCYLFTERGKTVTSKEFSQLLNFPNICFIIGGSYGVDEKLIAKSRPDIGFLSFGKLTFAHKIFKLIVLEQIYRGFSIKFNRKYHHAD</sequence>
<gene>
    <name evidence="1" type="primary">rlmH</name>
    <name type="ordered locus">MHP7448_0004</name>
</gene>
<protein>
    <recommendedName>
        <fullName evidence="1">Ribosomal RNA large subunit methyltransferase H</fullName>
        <ecNumber evidence="1">2.1.1.177</ecNumber>
    </recommendedName>
    <alternativeName>
        <fullName evidence="1">23S rRNA (pseudouridine1915-N3)-methyltransferase</fullName>
    </alternativeName>
    <alternativeName>
        <fullName evidence="1">23S rRNA m3Psi1915 methyltransferase</fullName>
    </alternativeName>
    <alternativeName>
        <fullName evidence="1">rRNA (pseudouridine-N3-)-methyltransferase RlmH</fullName>
    </alternativeName>
</protein>
<evidence type="ECO:0000255" key="1">
    <source>
        <dbReference type="HAMAP-Rule" id="MF_00658"/>
    </source>
</evidence>
<dbReference type="EC" id="2.1.1.177" evidence="1"/>
<dbReference type="EMBL" id="AE017244">
    <property type="protein sequence ID" value="AAZ53381.2"/>
    <property type="molecule type" value="Genomic_DNA"/>
</dbReference>
<dbReference type="RefSeq" id="WP_044272260.1">
    <property type="nucleotide sequence ID" value="NC_007332.1"/>
</dbReference>
<dbReference type="SMR" id="Q4A908"/>
<dbReference type="KEGG" id="mhp:MHP7448_0004"/>
<dbReference type="HOGENOM" id="CLU_100552_2_0_14"/>
<dbReference type="Proteomes" id="UP000000553">
    <property type="component" value="Chromosome"/>
</dbReference>
<dbReference type="GO" id="GO:0005737">
    <property type="term" value="C:cytoplasm"/>
    <property type="evidence" value="ECO:0007669"/>
    <property type="project" value="UniProtKB-SubCell"/>
</dbReference>
<dbReference type="GO" id="GO:0070038">
    <property type="term" value="F:rRNA (pseudouridine-N3-)-methyltransferase activity"/>
    <property type="evidence" value="ECO:0007669"/>
    <property type="project" value="UniProtKB-UniRule"/>
</dbReference>
<dbReference type="CDD" id="cd18081">
    <property type="entry name" value="RlmH-like"/>
    <property type="match status" value="1"/>
</dbReference>
<dbReference type="Gene3D" id="3.40.1280.10">
    <property type="match status" value="1"/>
</dbReference>
<dbReference type="HAMAP" id="MF_00658">
    <property type="entry name" value="23SrRNA_methyltr_H"/>
    <property type="match status" value="1"/>
</dbReference>
<dbReference type="InterPro" id="IPR029028">
    <property type="entry name" value="Alpha/beta_knot_MTases"/>
</dbReference>
<dbReference type="InterPro" id="IPR003742">
    <property type="entry name" value="RlmH-like"/>
</dbReference>
<dbReference type="InterPro" id="IPR029026">
    <property type="entry name" value="tRNA_m1G_MTases_N"/>
</dbReference>
<dbReference type="PANTHER" id="PTHR33603">
    <property type="entry name" value="METHYLTRANSFERASE"/>
    <property type="match status" value="1"/>
</dbReference>
<dbReference type="PANTHER" id="PTHR33603:SF1">
    <property type="entry name" value="RIBOSOMAL RNA LARGE SUBUNIT METHYLTRANSFERASE H"/>
    <property type="match status" value="1"/>
</dbReference>
<dbReference type="Pfam" id="PF02590">
    <property type="entry name" value="SPOUT_MTase"/>
    <property type="match status" value="1"/>
</dbReference>
<dbReference type="PIRSF" id="PIRSF004505">
    <property type="entry name" value="MT_bac"/>
    <property type="match status" value="1"/>
</dbReference>
<dbReference type="SUPFAM" id="SSF75217">
    <property type="entry name" value="alpha/beta knot"/>
    <property type="match status" value="1"/>
</dbReference>
<reference key="1">
    <citation type="journal article" date="2005" name="J. Bacteriol.">
        <title>Swine and poultry pathogens: the complete genome sequences of two strains of Mycoplasma hyopneumoniae and a strain of Mycoplasma synoviae.</title>
        <authorList>
            <person name="Vasconcelos A.T.R."/>
            <person name="Ferreira H.B."/>
            <person name="Bizarro C.V."/>
            <person name="Bonatto S.L."/>
            <person name="Carvalho M.O."/>
            <person name="Pinto P.M."/>
            <person name="Almeida D.F."/>
            <person name="Almeida L.G.P."/>
            <person name="Almeida R."/>
            <person name="Alves-Junior L."/>
            <person name="Assuncao E.N."/>
            <person name="Azevedo V.A.C."/>
            <person name="Bogo M.R."/>
            <person name="Brigido M.M."/>
            <person name="Brocchi M."/>
            <person name="Burity H.A."/>
            <person name="Camargo A.A."/>
            <person name="Camargo S.S."/>
            <person name="Carepo M.S."/>
            <person name="Carraro D.M."/>
            <person name="de Mattos Cascardo J.C."/>
            <person name="Castro L.A."/>
            <person name="Cavalcanti G."/>
            <person name="Chemale G."/>
            <person name="Collevatti R.G."/>
            <person name="Cunha C.W."/>
            <person name="Dallagiovanna B."/>
            <person name="Dambros B.P."/>
            <person name="Dellagostin O.A."/>
            <person name="Falcao C."/>
            <person name="Fantinatti-Garboggini F."/>
            <person name="Felipe M.S.S."/>
            <person name="Fiorentin L."/>
            <person name="Franco G.R."/>
            <person name="Freitas N.S.A."/>
            <person name="Frias D."/>
            <person name="Grangeiro T.B."/>
            <person name="Grisard E.C."/>
            <person name="Guimaraes C.T."/>
            <person name="Hungria M."/>
            <person name="Jardim S.N."/>
            <person name="Krieger M.A."/>
            <person name="Laurino J.P."/>
            <person name="Lima L.F.A."/>
            <person name="Lopes M.I."/>
            <person name="Loreto E.L.S."/>
            <person name="Madeira H.M.F."/>
            <person name="Manfio G.P."/>
            <person name="Maranhao A.Q."/>
            <person name="Martinkovics C.T."/>
            <person name="Medeiros S.R.B."/>
            <person name="Moreira M.A.M."/>
            <person name="Neiva M."/>
            <person name="Ramalho-Neto C.E."/>
            <person name="Nicolas M.F."/>
            <person name="Oliveira S.C."/>
            <person name="Paixao R.F.C."/>
            <person name="Pedrosa F.O."/>
            <person name="Pena S.D.J."/>
            <person name="Pereira M."/>
            <person name="Pereira-Ferrari L."/>
            <person name="Piffer I."/>
            <person name="Pinto L.S."/>
            <person name="Potrich D.P."/>
            <person name="Salim A.C.M."/>
            <person name="Santos F.R."/>
            <person name="Schmitt R."/>
            <person name="Schneider M.P.C."/>
            <person name="Schrank A."/>
            <person name="Schrank I.S."/>
            <person name="Schuck A.F."/>
            <person name="Seuanez H.N."/>
            <person name="Silva D.W."/>
            <person name="Silva R."/>
            <person name="Silva S.C."/>
            <person name="Soares C.M.A."/>
            <person name="Souza K.R.L."/>
            <person name="Souza R.C."/>
            <person name="Staats C.C."/>
            <person name="Steffens M.B.R."/>
            <person name="Teixeira S.M.R."/>
            <person name="Urmenyi T.P."/>
            <person name="Vainstein M.H."/>
            <person name="Zuccherato L.W."/>
            <person name="Simpson A.J.G."/>
            <person name="Zaha A."/>
        </authorList>
    </citation>
    <scope>NUCLEOTIDE SEQUENCE [LARGE SCALE GENOMIC DNA]</scope>
    <source>
        <strain>7448</strain>
    </source>
</reference>
<comment type="function">
    <text evidence="1">Specifically methylates the pseudouridine at position 1915 (m3Psi1915) in 23S rRNA.</text>
</comment>
<comment type="catalytic activity">
    <reaction evidence="1">
        <text>pseudouridine(1915) in 23S rRNA + S-adenosyl-L-methionine = N(3)-methylpseudouridine(1915) in 23S rRNA + S-adenosyl-L-homocysteine + H(+)</text>
        <dbReference type="Rhea" id="RHEA:42752"/>
        <dbReference type="Rhea" id="RHEA-COMP:10221"/>
        <dbReference type="Rhea" id="RHEA-COMP:10222"/>
        <dbReference type="ChEBI" id="CHEBI:15378"/>
        <dbReference type="ChEBI" id="CHEBI:57856"/>
        <dbReference type="ChEBI" id="CHEBI:59789"/>
        <dbReference type="ChEBI" id="CHEBI:65314"/>
        <dbReference type="ChEBI" id="CHEBI:74486"/>
        <dbReference type="EC" id="2.1.1.177"/>
    </reaction>
</comment>
<comment type="subunit">
    <text evidence="1">Homodimer.</text>
</comment>
<comment type="subcellular location">
    <subcellularLocation>
        <location evidence="1">Cytoplasm</location>
    </subcellularLocation>
</comment>
<comment type="similarity">
    <text evidence="1">Belongs to the RNA methyltransferase RlmH family.</text>
</comment>
<name>RLMH_MESH7</name>
<accession>Q4A908</accession>
<keyword id="KW-0963">Cytoplasm</keyword>
<keyword id="KW-0489">Methyltransferase</keyword>
<keyword id="KW-0698">rRNA processing</keyword>
<keyword id="KW-0949">S-adenosyl-L-methionine</keyword>
<keyword id="KW-0808">Transferase</keyword>
<organism>
    <name type="scientific">Mesomycoplasma hyopneumoniae (strain 7448)</name>
    <name type="common">Mycoplasma hyopneumoniae</name>
    <dbReference type="NCBI Taxonomy" id="262722"/>
    <lineage>
        <taxon>Bacteria</taxon>
        <taxon>Bacillati</taxon>
        <taxon>Mycoplasmatota</taxon>
        <taxon>Mycoplasmoidales</taxon>
        <taxon>Metamycoplasmataceae</taxon>
        <taxon>Mesomycoplasma</taxon>
    </lineage>
</organism>